<gene>
    <name evidence="1" type="primary">arcA</name>
    <name type="ordered locus">SPT_2160</name>
</gene>
<protein>
    <recommendedName>
        <fullName evidence="1">Arginine deiminase</fullName>
        <shortName evidence="1">ADI</shortName>
        <ecNumber evidence="1">3.5.3.6</ecNumber>
    </recommendedName>
    <alternativeName>
        <fullName evidence="1">Arginine dihydrolase</fullName>
        <shortName evidence="1">AD</shortName>
    </alternativeName>
</protein>
<evidence type="ECO:0000255" key="1">
    <source>
        <dbReference type="HAMAP-Rule" id="MF_00242"/>
    </source>
</evidence>
<dbReference type="EC" id="3.5.3.6" evidence="1"/>
<dbReference type="EMBL" id="CP000921">
    <property type="protein sequence ID" value="ACO24085.1"/>
    <property type="molecule type" value="Genomic_DNA"/>
</dbReference>
<dbReference type="RefSeq" id="WP_000094616.1">
    <property type="nucleotide sequence ID" value="NC_012469.1"/>
</dbReference>
<dbReference type="SMR" id="C1CU66"/>
<dbReference type="GeneID" id="45652626"/>
<dbReference type="KEGG" id="snt:SPT_2160"/>
<dbReference type="HOGENOM" id="CLU_052662_0_1_9"/>
<dbReference type="UniPathway" id="UPA00254">
    <property type="reaction ID" value="UER00364"/>
</dbReference>
<dbReference type="GO" id="GO:0005737">
    <property type="term" value="C:cytoplasm"/>
    <property type="evidence" value="ECO:0007669"/>
    <property type="project" value="UniProtKB-SubCell"/>
</dbReference>
<dbReference type="GO" id="GO:0016990">
    <property type="term" value="F:arginine deiminase activity"/>
    <property type="evidence" value="ECO:0007669"/>
    <property type="project" value="UniProtKB-UniRule"/>
</dbReference>
<dbReference type="GO" id="GO:0019547">
    <property type="term" value="P:arginine catabolic process to ornithine"/>
    <property type="evidence" value="ECO:0007669"/>
    <property type="project" value="UniProtKB-UniRule"/>
</dbReference>
<dbReference type="GO" id="GO:0019546">
    <property type="term" value="P:arginine deiminase pathway"/>
    <property type="evidence" value="ECO:0007669"/>
    <property type="project" value="TreeGrafter"/>
</dbReference>
<dbReference type="FunFam" id="1.10.3930.10:FF:000003">
    <property type="entry name" value="Arginine deiminase"/>
    <property type="match status" value="1"/>
</dbReference>
<dbReference type="Gene3D" id="1.10.3930.10">
    <property type="entry name" value="Arginine deiminase"/>
    <property type="match status" value="1"/>
</dbReference>
<dbReference type="Gene3D" id="3.75.10.10">
    <property type="entry name" value="L-arginine/glycine Amidinotransferase, Chain A"/>
    <property type="match status" value="1"/>
</dbReference>
<dbReference type="HAMAP" id="MF_00242">
    <property type="entry name" value="Arg_deiminase"/>
    <property type="match status" value="1"/>
</dbReference>
<dbReference type="InterPro" id="IPR003876">
    <property type="entry name" value="Arg_deiminase"/>
</dbReference>
<dbReference type="NCBIfam" id="TIGR01078">
    <property type="entry name" value="arcA"/>
    <property type="match status" value="1"/>
</dbReference>
<dbReference type="NCBIfam" id="NF002381">
    <property type="entry name" value="PRK01388.1"/>
    <property type="match status" value="1"/>
</dbReference>
<dbReference type="PANTHER" id="PTHR47271">
    <property type="entry name" value="ARGININE DEIMINASE"/>
    <property type="match status" value="1"/>
</dbReference>
<dbReference type="PANTHER" id="PTHR47271:SF2">
    <property type="entry name" value="ARGININE DEIMINASE"/>
    <property type="match status" value="1"/>
</dbReference>
<dbReference type="Pfam" id="PF02274">
    <property type="entry name" value="ADI"/>
    <property type="match status" value="1"/>
</dbReference>
<dbReference type="PIRSF" id="PIRSF006356">
    <property type="entry name" value="Arg_deiminase"/>
    <property type="match status" value="1"/>
</dbReference>
<dbReference type="PRINTS" id="PR01466">
    <property type="entry name" value="ARGDEIMINASE"/>
</dbReference>
<dbReference type="SUPFAM" id="SSF55909">
    <property type="entry name" value="Pentein"/>
    <property type="match status" value="1"/>
</dbReference>
<comment type="catalytic activity">
    <reaction evidence="1">
        <text>L-arginine + H2O = L-citrulline + NH4(+)</text>
        <dbReference type="Rhea" id="RHEA:19597"/>
        <dbReference type="ChEBI" id="CHEBI:15377"/>
        <dbReference type="ChEBI" id="CHEBI:28938"/>
        <dbReference type="ChEBI" id="CHEBI:32682"/>
        <dbReference type="ChEBI" id="CHEBI:57743"/>
        <dbReference type="EC" id="3.5.3.6"/>
    </reaction>
</comment>
<comment type="pathway">
    <text evidence="1">Amino-acid degradation; L-arginine degradation via ADI pathway; carbamoyl phosphate from L-arginine: step 1/2.</text>
</comment>
<comment type="subcellular location">
    <subcellularLocation>
        <location evidence="1">Cytoplasm</location>
    </subcellularLocation>
</comment>
<comment type="similarity">
    <text evidence="1">Belongs to the arginine deiminase family.</text>
</comment>
<sequence>MSSHPIQVFSEIGKLKKVMLHRPGKELENLLPDYLERLLFDDIPFLEDAQKEHDAFAQALRDEGIEVLYLEQLAAESLTSPEIRDQFIEEYLDEANIRDRQTKVAIRELLHGIKDNQELVEKTMAGIQKVELPEIPDEAKDLTDLVESDYPFAIDPMPNLYFTRDPFATIGNAVSLNHMFADTRNRETLYGKYIFKYHPIYGGKVDLVYNREEDTRIEGGDELVLSKDVLAVGISQRTDAASIEKLLVNIFKKNVGFKKVLAFEFANNRKFMHLDTVFTMVDYDKFTIHPEIEGDLHVYSVTYENEKLKIVEEKGDLAELLAQNLGVEKVHLIRCGGGNIVAAAREQWNDGSNTLTIAPGVVVVYDRNTVTNKILEEYGLRLIKIRGSELVRGRGGPRCMSMPFEREEV</sequence>
<name>ARCA_STRZT</name>
<organism>
    <name type="scientific">Streptococcus pneumoniae (strain Taiwan19F-14)</name>
    <dbReference type="NCBI Taxonomy" id="487213"/>
    <lineage>
        <taxon>Bacteria</taxon>
        <taxon>Bacillati</taxon>
        <taxon>Bacillota</taxon>
        <taxon>Bacilli</taxon>
        <taxon>Lactobacillales</taxon>
        <taxon>Streptococcaceae</taxon>
        <taxon>Streptococcus</taxon>
    </lineage>
</organism>
<reference key="1">
    <citation type="journal article" date="2010" name="Genome Biol.">
        <title>Structure and dynamics of the pan-genome of Streptococcus pneumoniae and closely related species.</title>
        <authorList>
            <person name="Donati C."/>
            <person name="Hiller N.L."/>
            <person name="Tettelin H."/>
            <person name="Muzzi A."/>
            <person name="Croucher N.J."/>
            <person name="Angiuoli S.V."/>
            <person name="Oggioni M."/>
            <person name="Dunning Hotopp J.C."/>
            <person name="Hu F.Z."/>
            <person name="Riley D.R."/>
            <person name="Covacci A."/>
            <person name="Mitchell T.J."/>
            <person name="Bentley S.D."/>
            <person name="Kilian M."/>
            <person name="Ehrlich G.D."/>
            <person name="Rappuoli R."/>
            <person name="Moxon E.R."/>
            <person name="Masignani V."/>
        </authorList>
    </citation>
    <scope>NUCLEOTIDE SEQUENCE [LARGE SCALE GENOMIC DNA]</scope>
    <source>
        <strain>Taiwan19F-14</strain>
    </source>
</reference>
<proteinExistence type="inferred from homology"/>
<keyword id="KW-0056">Arginine metabolism</keyword>
<keyword id="KW-0963">Cytoplasm</keyword>
<keyword id="KW-0378">Hydrolase</keyword>
<feature type="chain" id="PRO_1000125328" description="Arginine deiminase">
    <location>
        <begin position="1"/>
        <end position="409"/>
    </location>
</feature>
<feature type="active site" description="Amidino-cysteine intermediate" evidence="1">
    <location>
        <position position="399"/>
    </location>
</feature>
<accession>C1CU66</accession>